<dbReference type="EC" id="1.5.1.5" evidence="1"/>
<dbReference type="EC" id="3.5.4.9" evidence="1"/>
<dbReference type="EMBL" id="CP001108">
    <property type="protein sequence ID" value="ACF46207.1"/>
    <property type="molecule type" value="Genomic_DNA"/>
</dbReference>
<dbReference type="RefSeq" id="WP_012505742.1">
    <property type="nucleotide sequence ID" value="NC_011059.1"/>
</dbReference>
<dbReference type="SMR" id="B4S820"/>
<dbReference type="STRING" id="290512.Paes_1178"/>
<dbReference type="KEGG" id="paa:Paes_1178"/>
<dbReference type="eggNOG" id="COG0190">
    <property type="taxonomic scope" value="Bacteria"/>
</dbReference>
<dbReference type="HOGENOM" id="CLU_034045_2_1_10"/>
<dbReference type="UniPathway" id="UPA00193"/>
<dbReference type="Proteomes" id="UP000002725">
    <property type="component" value="Chromosome"/>
</dbReference>
<dbReference type="GO" id="GO:0005829">
    <property type="term" value="C:cytosol"/>
    <property type="evidence" value="ECO:0007669"/>
    <property type="project" value="TreeGrafter"/>
</dbReference>
<dbReference type="GO" id="GO:0004477">
    <property type="term" value="F:methenyltetrahydrofolate cyclohydrolase activity"/>
    <property type="evidence" value="ECO:0007669"/>
    <property type="project" value="UniProtKB-UniRule"/>
</dbReference>
<dbReference type="GO" id="GO:0004488">
    <property type="term" value="F:methylenetetrahydrofolate dehydrogenase (NADP+) activity"/>
    <property type="evidence" value="ECO:0007669"/>
    <property type="project" value="UniProtKB-UniRule"/>
</dbReference>
<dbReference type="GO" id="GO:0000105">
    <property type="term" value="P:L-histidine biosynthetic process"/>
    <property type="evidence" value="ECO:0007669"/>
    <property type="project" value="UniProtKB-KW"/>
</dbReference>
<dbReference type="GO" id="GO:0009086">
    <property type="term" value="P:methionine biosynthetic process"/>
    <property type="evidence" value="ECO:0007669"/>
    <property type="project" value="UniProtKB-KW"/>
</dbReference>
<dbReference type="GO" id="GO:0006164">
    <property type="term" value="P:purine nucleotide biosynthetic process"/>
    <property type="evidence" value="ECO:0007669"/>
    <property type="project" value="UniProtKB-KW"/>
</dbReference>
<dbReference type="GO" id="GO:0035999">
    <property type="term" value="P:tetrahydrofolate interconversion"/>
    <property type="evidence" value="ECO:0007669"/>
    <property type="project" value="UniProtKB-UniRule"/>
</dbReference>
<dbReference type="CDD" id="cd01080">
    <property type="entry name" value="NAD_bind_m-THF_DH_Cyclohyd"/>
    <property type="match status" value="1"/>
</dbReference>
<dbReference type="FunFam" id="3.40.50.720:FF:000189">
    <property type="entry name" value="Bifunctional protein FolD"/>
    <property type="match status" value="1"/>
</dbReference>
<dbReference type="FunFam" id="3.40.50.10860:FF:000005">
    <property type="entry name" value="C-1-tetrahydrofolate synthase, cytoplasmic, putative"/>
    <property type="match status" value="1"/>
</dbReference>
<dbReference type="Gene3D" id="3.40.50.10860">
    <property type="entry name" value="Leucine Dehydrogenase, chain A, domain 1"/>
    <property type="match status" value="1"/>
</dbReference>
<dbReference type="Gene3D" id="3.40.50.720">
    <property type="entry name" value="NAD(P)-binding Rossmann-like Domain"/>
    <property type="match status" value="1"/>
</dbReference>
<dbReference type="HAMAP" id="MF_01576">
    <property type="entry name" value="THF_DHG_CYH"/>
    <property type="match status" value="1"/>
</dbReference>
<dbReference type="InterPro" id="IPR046346">
    <property type="entry name" value="Aminoacid_DH-like_N_sf"/>
</dbReference>
<dbReference type="InterPro" id="IPR036291">
    <property type="entry name" value="NAD(P)-bd_dom_sf"/>
</dbReference>
<dbReference type="InterPro" id="IPR000672">
    <property type="entry name" value="THF_DH/CycHdrlase"/>
</dbReference>
<dbReference type="InterPro" id="IPR020630">
    <property type="entry name" value="THF_DH/CycHdrlase_cat_dom"/>
</dbReference>
<dbReference type="InterPro" id="IPR020867">
    <property type="entry name" value="THF_DH/CycHdrlase_CS"/>
</dbReference>
<dbReference type="InterPro" id="IPR020631">
    <property type="entry name" value="THF_DH/CycHdrlase_NAD-bd_dom"/>
</dbReference>
<dbReference type="NCBIfam" id="NF008058">
    <property type="entry name" value="PRK10792.1"/>
    <property type="match status" value="1"/>
</dbReference>
<dbReference type="NCBIfam" id="NF010771">
    <property type="entry name" value="PRK14174.1"/>
    <property type="match status" value="1"/>
</dbReference>
<dbReference type="NCBIfam" id="NF010783">
    <property type="entry name" value="PRK14186.1"/>
    <property type="match status" value="1"/>
</dbReference>
<dbReference type="PANTHER" id="PTHR48099:SF5">
    <property type="entry name" value="C-1-TETRAHYDROFOLATE SYNTHASE, CYTOPLASMIC"/>
    <property type="match status" value="1"/>
</dbReference>
<dbReference type="PANTHER" id="PTHR48099">
    <property type="entry name" value="C-1-TETRAHYDROFOLATE SYNTHASE, CYTOPLASMIC-RELATED"/>
    <property type="match status" value="1"/>
</dbReference>
<dbReference type="Pfam" id="PF00763">
    <property type="entry name" value="THF_DHG_CYH"/>
    <property type="match status" value="1"/>
</dbReference>
<dbReference type="Pfam" id="PF02882">
    <property type="entry name" value="THF_DHG_CYH_C"/>
    <property type="match status" value="1"/>
</dbReference>
<dbReference type="PRINTS" id="PR00085">
    <property type="entry name" value="THFDHDRGNASE"/>
</dbReference>
<dbReference type="SUPFAM" id="SSF53223">
    <property type="entry name" value="Aminoacid dehydrogenase-like, N-terminal domain"/>
    <property type="match status" value="1"/>
</dbReference>
<dbReference type="SUPFAM" id="SSF51735">
    <property type="entry name" value="NAD(P)-binding Rossmann-fold domains"/>
    <property type="match status" value="1"/>
</dbReference>
<dbReference type="PROSITE" id="PS00767">
    <property type="entry name" value="THF_DHG_CYH_2"/>
    <property type="match status" value="1"/>
</dbReference>
<organism>
    <name type="scientific">Prosthecochloris aestuarii (strain DSM 271 / SK 413)</name>
    <dbReference type="NCBI Taxonomy" id="290512"/>
    <lineage>
        <taxon>Bacteria</taxon>
        <taxon>Pseudomonadati</taxon>
        <taxon>Chlorobiota</taxon>
        <taxon>Chlorobiia</taxon>
        <taxon>Chlorobiales</taxon>
        <taxon>Chlorobiaceae</taxon>
        <taxon>Prosthecochloris</taxon>
    </lineage>
</organism>
<sequence>MMLIDGKKVSTDLKNELKTRVEELKAKAGCVPGLTVIIVGEDPASQVYVRNKAKSCKETGMNSTVIELPAETTQEELLGKIEALNQDPDVHGILVQQPLPSHIEEYAVTMAIDPAKDVDGFHPENVGQMVLGNLDKCFISCTPFGILELLRRYDIETRGKHCVVVGRSNIVGKPMANLMLQKLRETNCTVTVCHSATQNMPELTRQADILIAAIGRANFITREMVKPGAVVIDVGINRIEDPSRKSGFRLAGDVDFDNVAEMASAITPVPGGVGPMTIAMLLKNTLQSFARSHNL</sequence>
<protein>
    <recommendedName>
        <fullName evidence="1">Bifunctional protein FolD</fullName>
    </recommendedName>
    <domain>
        <recommendedName>
            <fullName evidence="1">Methylenetetrahydrofolate dehydrogenase</fullName>
            <ecNumber evidence="1">1.5.1.5</ecNumber>
        </recommendedName>
    </domain>
    <domain>
        <recommendedName>
            <fullName evidence="1">Methenyltetrahydrofolate cyclohydrolase</fullName>
            <ecNumber evidence="1">3.5.4.9</ecNumber>
        </recommendedName>
    </domain>
</protein>
<reference key="1">
    <citation type="submission" date="2008-06" db="EMBL/GenBank/DDBJ databases">
        <title>Complete sequence of chromosome of Prosthecochloris aestuarii DSM 271.</title>
        <authorList>
            <consortium name="US DOE Joint Genome Institute"/>
            <person name="Lucas S."/>
            <person name="Copeland A."/>
            <person name="Lapidus A."/>
            <person name="Glavina del Rio T."/>
            <person name="Dalin E."/>
            <person name="Tice H."/>
            <person name="Bruce D."/>
            <person name="Goodwin L."/>
            <person name="Pitluck S."/>
            <person name="Schmutz J."/>
            <person name="Larimer F."/>
            <person name="Land M."/>
            <person name="Hauser L."/>
            <person name="Kyrpides N."/>
            <person name="Anderson I."/>
            <person name="Liu Z."/>
            <person name="Li T."/>
            <person name="Zhao F."/>
            <person name="Overmann J."/>
            <person name="Bryant D.A."/>
            <person name="Richardson P."/>
        </authorList>
    </citation>
    <scope>NUCLEOTIDE SEQUENCE [LARGE SCALE GENOMIC DNA]</scope>
    <source>
        <strain>DSM 271 / SK 413</strain>
    </source>
</reference>
<name>FOLD_PROA2</name>
<accession>B4S820</accession>
<comment type="function">
    <text evidence="1">Catalyzes the oxidation of 5,10-methylenetetrahydrofolate to 5,10-methenyltetrahydrofolate and then the hydrolysis of 5,10-methenyltetrahydrofolate to 10-formyltetrahydrofolate.</text>
</comment>
<comment type="catalytic activity">
    <reaction evidence="1">
        <text>(6R)-5,10-methylene-5,6,7,8-tetrahydrofolate + NADP(+) = (6R)-5,10-methenyltetrahydrofolate + NADPH</text>
        <dbReference type="Rhea" id="RHEA:22812"/>
        <dbReference type="ChEBI" id="CHEBI:15636"/>
        <dbReference type="ChEBI" id="CHEBI:57455"/>
        <dbReference type="ChEBI" id="CHEBI:57783"/>
        <dbReference type="ChEBI" id="CHEBI:58349"/>
        <dbReference type="EC" id="1.5.1.5"/>
    </reaction>
</comment>
<comment type="catalytic activity">
    <reaction evidence="1">
        <text>(6R)-5,10-methenyltetrahydrofolate + H2O = (6R)-10-formyltetrahydrofolate + H(+)</text>
        <dbReference type="Rhea" id="RHEA:23700"/>
        <dbReference type="ChEBI" id="CHEBI:15377"/>
        <dbReference type="ChEBI" id="CHEBI:15378"/>
        <dbReference type="ChEBI" id="CHEBI:57455"/>
        <dbReference type="ChEBI" id="CHEBI:195366"/>
        <dbReference type="EC" id="3.5.4.9"/>
    </reaction>
</comment>
<comment type="pathway">
    <text evidence="1">One-carbon metabolism; tetrahydrofolate interconversion.</text>
</comment>
<comment type="subunit">
    <text evidence="1">Homodimer.</text>
</comment>
<comment type="similarity">
    <text evidence="1">Belongs to the tetrahydrofolate dehydrogenase/cyclohydrolase family.</text>
</comment>
<evidence type="ECO:0000255" key="1">
    <source>
        <dbReference type="HAMAP-Rule" id="MF_01576"/>
    </source>
</evidence>
<keyword id="KW-0028">Amino-acid biosynthesis</keyword>
<keyword id="KW-0368">Histidine biosynthesis</keyword>
<keyword id="KW-0378">Hydrolase</keyword>
<keyword id="KW-0486">Methionine biosynthesis</keyword>
<keyword id="KW-0511">Multifunctional enzyme</keyword>
<keyword id="KW-0521">NADP</keyword>
<keyword id="KW-0554">One-carbon metabolism</keyword>
<keyword id="KW-0560">Oxidoreductase</keyword>
<keyword id="KW-0658">Purine biosynthesis</keyword>
<proteinExistence type="inferred from homology"/>
<feature type="chain" id="PRO_1000147508" description="Bifunctional protein FolD">
    <location>
        <begin position="1"/>
        <end position="295"/>
    </location>
</feature>
<feature type="binding site" evidence="1">
    <location>
        <begin position="166"/>
        <end position="168"/>
    </location>
    <ligand>
        <name>NADP(+)</name>
        <dbReference type="ChEBI" id="CHEBI:58349"/>
    </ligand>
</feature>
<feature type="binding site" evidence="1">
    <location>
        <position position="195"/>
    </location>
    <ligand>
        <name>NADP(+)</name>
        <dbReference type="ChEBI" id="CHEBI:58349"/>
    </ligand>
</feature>
<feature type="binding site" evidence="1">
    <location>
        <position position="236"/>
    </location>
    <ligand>
        <name>NADP(+)</name>
        <dbReference type="ChEBI" id="CHEBI:58349"/>
    </ligand>
</feature>
<gene>
    <name evidence="1" type="primary">folD</name>
    <name type="ordered locus">Paes_1178</name>
</gene>